<sequence length="591" mass="64621">MSSYDRRFADPNSYRQRSGAPVGSSQPMDPSAAPYNPRYTGGGGGYGPSPVMAGDNSGYNRYPSFQPPSGGFSVGRGGGRGGYGQYGDRNGGGNWGGGGGRGGSSKRELDSVSLPKQNFGNLVHFEKNFYVESPTVQAMTEQDVAMYRTERDISVEGRDVPKPMKMFQDANFPDNILEAIAKLGFTEPTPIQAQGWPMALKGRDLIGIAETGSGKTLAYLLPALVHVSAQPRLGQDDGPIVLILAPTRELAVQIQEESRKFGLRSGVRSTCIYGGAPKGPQIRDLRRGVEIVIATPGRLIDMLECQHTNLKRVTYLVLDEADRMLDMGFEPQIRKIVSQIRPDRQTLLWSATWPREVETLARQFLRDPYKAIIGSTDLKANQSINQVIEIVPTPEKYNRLLTLLKQLMDGSKILIFVETKRGCDQVTRQLRMDGWPALAIHGDKTQSERDRVLAEFKSGRSPIMTATDVAARGLDVKDIKCVVNYDFPNTLEDYIHRIGRTGRAGAKGMAFTFFTHDNAKFARELVKILQEAGQVVPPTLSALVRSSGSGYGGSGGGRNFRPRGGGRGGGFGDKRSRSTSNFVPHGGKRTW</sequence>
<gene>
    <name type="primary">RH30</name>
    <name type="ordered locus">At5g63120</name>
    <name type="ORF">MDC12.8</name>
</gene>
<accession>Q8W4R3</accession>
<accession>Q0WVX4</accession>
<accession>Q9FML1</accession>
<accession>Q9ZRZ7</accession>
<dbReference type="EC" id="3.6.4.13"/>
<dbReference type="EMBL" id="AB008265">
    <property type="protein sequence ID" value="BAB10554.1"/>
    <property type="status" value="ALT_SEQ"/>
    <property type="molecule type" value="Genomic_DNA"/>
</dbReference>
<dbReference type="EMBL" id="CP002688">
    <property type="protein sequence ID" value="AED97706.1"/>
    <property type="molecule type" value="Genomic_DNA"/>
</dbReference>
<dbReference type="EMBL" id="CP002688">
    <property type="protein sequence ID" value="AED97707.1"/>
    <property type="molecule type" value="Genomic_DNA"/>
</dbReference>
<dbReference type="EMBL" id="AY060589">
    <property type="protein sequence ID" value="AAL31214.1"/>
    <property type="molecule type" value="mRNA"/>
</dbReference>
<dbReference type="EMBL" id="BT000610">
    <property type="protein sequence ID" value="AAN18177.1"/>
    <property type="molecule type" value="mRNA"/>
</dbReference>
<dbReference type="EMBL" id="AK226611">
    <property type="protein sequence ID" value="BAE98724.1"/>
    <property type="molecule type" value="mRNA"/>
</dbReference>
<dbReference type="EMBL" id="AJ010476">
    <property type="protein sequence ID" value="CAA09215.1"/>
    <property type="molecule type" value="mRNA"/>
</dbReference>
<dbReference type="PIR" id="T51349">
    <property type="entry name" value="T51349"/>
</dbReference>
<dbReference type="RefSeq" id="NP_568964.1">
    <molecule id="Q8W4R3-2"/>
    <property type="nucleotide sequence ID" value="NM_125706.2"/>
</dbReference>
<dbReference type="RefSeq" id="NP_974985.1">
    <molecule id="Q8W4R3-1"/>
    <property type="nucleotide sequence ID" value="NM_203256.2"/>
</dbReference>
<dbReference type="SMR" id="Q8W4R3"/>
<dbReference type="FunCoup" id="Q8W4R3">
    <property type="interactions" value="3656"/>
</dbReference>
<dbReference type="STRING" id="3702.Q8W4R3"/>
<dbReference type="GlyGen" id="Q8W4R3">
    <property type="glycosylation" value="1 site"/>
</dbReference>
<dbReference type="iPTMnet" id="Q8W4R3"/>
<dbReference type="PaxDb" id="3702-AT5G63120.2"/>
<dbReference type="ProteomicsDB" id="236913">
    <molecule id="Q8W4R3-1"/>
</dbReference>
<dbReference type="EnsemblPlants" id="AT5G63120.1">
    <molecule id="Q8W4R3-2"/>
    <property type="protein sequence ID" value="AT5G63120.1"/>
    <property type="gene ID" value="AT5G63120"/>
</dbReference>
<dbReference type="EnsemblPlants" id="AT5G63120.2">
    <molecule id="Q8W4R3-1"/>
    <property type="protein sequence ID" value="AT5G63120.2"/>
    <property type="gene ID" value="AT5G63120"/>
</dbReference>
<dbReference type="GeneID" id="836432"/>
<dbReference type="Gramene" id="AT5G63120.1">
    <molecule id="Q8W4R3-2"/>
    <property type="protein sequence ID" value="AT5G63120.1"/>
    <property type="gene ID" value="AT5G63120"/>
</dbReference>
<dbReference type="Gramene" id="AT5G63120.2">
    <molecule id="Q8W4R3-1"/>
    <property type="protein sequence ID" value="AT5G63120.2"/>
    <property type="gene ID" value="AT5G63120"/>
</dbReference>
<dbReference type="KEGG" id="ath:AT5G63120"/>
<dbReference type="Araport" id="AT5G63120"/>
<dbReference type="TAIR" id="AT5G63120">
    <property type="gene designation" value="RH30"/>
</dbReference>
<dbReference type="eggNOG" id="KOG0331">
    <property type="taxonomic scope" value="Eukaryota"/>
</dbReference>
<dbReference type="InParanoid" id="Q8W4R3"/>
<dbReference type="OMA" id="WQALSIH"/>
<dbReference type="OrthoDB" id="196131at2759"/>
<dbReference type="PhylomeDB" id="Q8W4R3"/>
<dbReference type="CD-CODE" id="4299E36E">
    <property type="entry name" value="Nucleolus"/>
</dbReference>
<dbReference type="PRO" id="PR:Q8W4R3"/>
<dbReference type="Proteomes" id="UP000006548">
    <property type="component" value="Chromosome 5"/>
</dbReference>
<dbReference type="ExpressionAtlas" id="Q8W4R3">
    <property type="expression patterns" value="baseline and differential"/>
</dbReference>
<dbReference type="GO" id="GO:0005634">
    <property type="term" value="C:nucleus"/>
    <property type="evidence" value="ECO:0007669"/>
    <property type="project" value="UniProtKB-SubCell"/>
</dbReference>
<dbReference type="GO" id="GO:0005524">
    <property type="term" value="F:ATP binding"/>
    <property type="evidence" value="ECO:0007669"/>
    <property type="project" value="UniProtKB-KW"/>
</dbReference>
<dbReference type="GO" id="GO:0016887">
    <property type="term" value="F:ATP hydrolysis activity"/>
    <property type="evidence" value="ECO:0007669"/>
    <property type="project" value="RHEA"/>
</dbReference>
<dbReference type="GO" id="GO:0003729">
    <property type="term" value="F:mRNA binding"/>
    <property type="evidence" value="ECO:0000314"/>
    <property type="project" value="TAIR"/>
</dbReference>
<dbReference type="GO" id="GO:0003724">
    <property type="term" value="F:RNA helicase activity"/>
    <property type="evidence" value="ECO:0007669"/>
    <property type="project" value="UniProtKB-EC"/>
</dbReference>
<dbReference type="GO" id="GO:0000184">
    <property type="term" value="P:nuclear-transcribed mRNA catabolic process, nonsense-mediated decay"/>
    <property type="evidence" value="ECO:0007669"/>
    <property type="project" value="UniProtKB-KW"/>
</dbReference>
<dbReference type="GO" id="GO:0006364">
    <property type="term" value="P:rRNA processing"/>
    <property type="evidence" value="ECO:0007669"/>
    <property type="project" value="UniProtKB-KW"/>
</dbReference>
<dbReference type="CDD" id="cd17966">
    <property type="entry name" value="DEADc_DDX5_DDX17"/>
    <property type="match status" value="1"/>
</dbReference>
<dbReference type="CDD" id="cd18787">
    <property type="entry name" value="SF2_C_DEAD"/>
    <property type="match status" value="1"/>
</dbReference>
<dbReference type="FunFam" id="3.40.50.300:FF:000008">
    <property type="entry name" value="ATP-dependent RNA helicase RhlB"/>
    <property type="match status" value="1"/>
</dbReference>
<dbReference type="FunFam" id="3.40.50.300:FF:000079">
    <property type="entry name" value="probable ATP-dependent RNA helicase DDX17"/>
    <property type="match status" value="1"/>
</dbReference>
<dbReference type="Gene3D" id="3.40.50.300">
    <property type="entry name" value="P-loop containing nucleotide triphosphate hydrolases"/>
    <property type="match status" value="2"/>
</dbReference>
<dbReference type="InterPro" id="IPR011545">
    <property type="entry name" value="DEAD/DEAH_box_helicase_dom"/>
</dbReference>
<dbReference type="InterPro" id="IPR014001">
    <property type="entry name" value="Helicase_ATP-bd"/>
</dbReference>
<dbReference type="InterPro" id="IPR001650">
    <property type="entry name" value="Helicase_C-like"/>
</dbReference>
<dbReference type="InterPro" id="IPR027417">
    <property type="entry name" value="P-loop_NTPase"/>
</dbReference>
<dbReference type="InterPro" id="IPR000629">
    <property type="entry name" value="RNA-helicase_DEAD-box_CS"/>
</dbReference>
<dbReference type="InterPro" id="IPR014014">
    <property type="entry name" value="RNA_helicase_DEAD_Q_motif"/>
</dbReference>
<dbReference type="PANTHER" id="PTHR47958">
    <property type="entry name" value="ATP-DEPENDENT RNA HELICASE DBP3"/>
    <property type="match status" value="1"/>
</dbReference>
<dbReference type="Pfam" id="PF00270">
    <property type="entry name" value="DEAD"/>
    <property type="match status" value="1"/>
</dbReference>
<dbReference type="Pfam" id="PF00271">
    <property type="entry name" value="Helicase_C"/>
    <property type="match status" value="1"/>
</dbReference>
<dbReference type="SMART" id="SM00487">
    <property type="entry name" value="DEXDc"/>
    <property type="match status" value="1"/>
</dbReference>
<dbReference type="SMART" id="SM00490">
    <property type="entry name" value="HELICc"/>
    <property type="match status" value="1"/>
</dbReference>
<dbReference type="SUPFAM" id="SSF52540">
    <property type="entry name" value="P-loop containing nucleoside triphosphate hydrolases"/>
    <property type="match status" value="1"/>
</dbReference>
<dbReference type="PROSITE" id="PS00039">
    <property type="entry name" value="DEAD_ATP_HELICASE"/>
    <property type="match status" value="1"/>
</dbReference>
<dbReference type="PROSITE" id="PS51192">
    <property type="entry name" value="HELICASE_ATP_BIND_1"/>
    <property type="match status" value="1"/>
</dbReference>
<dbReference type="PROSITE" id="PS51194">
    <property type="entry name" value="HELICASE_CTER"/>
    <property type="match status" value="1"/>
</dbReference>
<dbReference type="PROSITE" id="PS51195">
    <property type="entry name" value="Q_MOTIF"/>
    <property type="match status" value="1"/>
</dbReference>
<keyword id="KW-0025">Alternative splicing</keyword>
<keyword id="KW-0067">ATP-binding</keyword>
<keyword id="KW-0347">Helicase</keyword>
<keyword id="KW-0378">Hydrolase</keyword>
<keyword id="KW-0866">Nonsense-mediated mRNA decay</keyword>
<keyword id="KW-0547">Nucleotide-binding</keyword>
<keyword id="KW-0539">Nucleus</keyword>
<keyword id="KW-1185">Reference proteome</keyword>
<keyword id="KW-0690">Ribosome biogenesis</keyword>
<keyword id="KW-0694">RNA-binding</keyword>
<keyword id="KW-0698">rRNA processing</keyword>
<protein>
    <recommendedName>
        <fullName>DEAD-box ATP-dependent RNA helicase 30</fullName>
        <ecNumber>3.6.4.13</ecNumber>
    </recommendedName>
</protein>
<name>RH30_ARATH</name>
<reference key="1">
    <citation type="journal article" date="1997" name="DNA Res.">
        <title>Structural analysis of Arabidopsis thaliana chromosome 5. III. Sequence features of the regions of 1,191,918 bp covered by seventeen physically assigned P1 clones.</title>
        <authorList>
            <person name="Nakamura Y."/>
            <person name="Sato S."/>
            <person name="Kaneko T."/>
            <person name="Kotani H."/>
            <person name="Asamizu E."/>
            <person name="Miyajima N."/>
            <person name="Tabata S."/>
        </authorList>
    </citation>
    <scope>NUCLEOTIDE SEQUENCE [LARGE SCALE GENOMIC DNA]</scope>
    <source>
        <strain>cv. Columbia</strain>
    </source>
</reference>
<reference key="2">
    <citation type="journal article" date="2017" name="Plant J.">
        <title>Araport11: a complete reannotation of the Arabidopsis thaliana reference genome.</title>
        <authorList>
            <person name="Cheng C.Y."/>
            <person name="Krishnakumar V."/>
            <person name="Chan A.P."/>
            <person name="Thibaud-Nissen F."/>
            <person name="Schobel S."/>
            <person name="Town C.D."/>
        </authorList>
    </citation>
    <scope>GENOME REANNOTATION</scope>
    <source>
        <strain>cv. Columbia</strain>
    </source>
</reference>
<reference key="3">
    <citation type="journal article" date="2003" name="Science">
        <title>Empirical analysis of transcriptional activity in the Arabidopsis genome.</title>
        <authorList>
            <person name="Yamada K."/>
            <person name="Lim J."/>
            <person name="Dale J.M."/>
            <person name="Chen H."/>
            <person name="Shinn P."/>
            <person name="Palm C.J."/>
            <person name="Southwick A.M."/>
            <person name="Wu H.C."/>
            <person name="Kim C.J."/>
            <person name="Nguyen M."/>
            <person name="Pham P.K."/>
            <person name="Cheuk R.F."/>
            <person name="Karlin-Newmann G."/>
            <person name="Liu S.X."/>
            <person name="Lam B."/>
            <person name="Sakano H."/>
            <person name="Wu T."/>
            <person name="Yu G."/>
            <person name="Miranda M."/>
            <person name="Quach H.L."/>
            <person name="Tripp M."/>
            <person name="Chang C.H."/>
            <person name="Lee J.M."/>
            <person name="Toriumi M.J."/>
            <person name="Chan M.M."/>
            <person name="Tang C.C."/>
            <person name="Onodera C.S."/>
            <person name="Deng J.M."/>
            <person name="Akiyama K."/>
            <person name="Ansari Y."/>
            <person name="Arakawa T."/>
            <person name="Banh J."/>
            <person name="Banno F."/>
            <person name="Bowser L."/>
            <person name="Brooks S.Y."/>
            <person name="Carninci P."/>
            <person name="Chao Q."/>
            <person name="Choy N."/>
            <person name="Enju A."/>
            <person name="Goldsmith A.D."/>
            <person name="Gurjal M."/>
            <person name="Hansen N.F."/>
            <person name="Hayashizaki Y."/>
            <person name="Johnson-Hopson C."/>
            <person name="Hsuan V.W."/>
            <person name="Iida K."/>
            <person name="Karnes M."/>
            <person name="Khan S."/>
            <person name="Koesema E."/>
            <person name="Ishida J."/>
            <person name="Jiang P.X."/>
            <person name="Jones T."/>
            <person name="Kawai J."/>
            <person name="Kamiya A."/>
            <person name="Meyers C."/>
            <person name="Nakajima M."/>
            <person name="Narusaka M."/>
            <person name="Seki M."/>
            <person name="Sakurai T."/>
            <person name="Satou M."/>
            <person name="Tamse R."/>
            <person name="Vaysberg M."/>
            <person name="Wallender E.K."/>
            <person name="Wong C."/>
            <person name="Yamamura Y."/>
            <person name="Yuan S."/>
            <person name="Shinozaki K."/>
            <person name="Davis R.W."/>
            <person name="Theologis A."/>
            <person name="Ecker J.R."/>
        </authorList>
    </citation>
    <scope>NUCLEOTIDE SEQUENCE [LARGE SCALE MRNA] (ISOFORM 2)</scope>
    <source>
        <strain>cv. Columbia</strain>
    </source>
</reference>
<reference key="4">
    <citation type="submission" date="2006-07" db="EMBL/GenBank/DDBJ databases">
        <title>Large-scale analysis of RIKEN Arabidopsis full-length (RAFL) cDNAs.</title>
        <authorList>
            <person name="Totoki Y."/>
            <person name="Seki M."/>
            <person name="Ishida J."/>
            <person name="Nakajima M."/>
            <person name="Enju A."/>
            <person name="Kamiya A."/>
            <person name="Narusaka M."/>
            <person name="Shin-i T."/>
            <person name="Nakagawa M."/>
            <person name="Sakamoto N."/>
            <person name="Oishi K."/>
            <person name="Kohara Y."/>
            <person name="Kobayashi M."/>
            <person name="Toyoda A."/>
            <person name="Sakaki Y."/>
            <person name="Sakurai T."/>
            <person name="Iida K."/>
            <person name="Akiyama K."/>
            <person name="Satou M."/>
            <person name="Toyoda T."/>
            <person name="Konagaya A."/>
            <person name="Carninci P."/>
            <person name="Kawai J."/>
            <person name="Hayashizaki Y."/>
            <person name="Shinozaki K."/>
        </authorList>
    </citation>
    <scope>NUCLEOTIDE SEQUENCE [LARGE SCALE MRNA] (ISOFORM 1)</scope>
    <source>
        <strain>cv. Columbia</strain>
    </source>
</reference>
<reference key="5">
    <citation type="journal article" date="1999" name="Nucleic Acids Res.">
        <title>The DEAD box RNA helicase family in Arabidopsis thaliana.</title>
        <authorList>
            <person name="Aubourg S."/>
            <person name="Kreis M."/>
            <person name="Lecharny A."/>
        </authorList>
    </citation>
    <scope>NUCLEOTIDE SEQUENCE [MRNA] OF 257-519 (ISOFORM 1)</scope>
    <source>
        <strain>cv. Columbia</strain>
    </source>
</reference>
<reference key="6">
    <citation type="journal article" date="2004" name="Plant Biotechnol. J.">
        <title>DEAD-box RNA helicases in Arabidopsis thaliana: establishing a link between quantitative expression, gene structure and evolution of a family of genes.</title>
        <authorList>
            <person name="Mingam A."/>
            <person name="Toffano-Nioche C."/>
            <person name="Brunaud V."/>
            <person name="Boudet N."/>
            <person name="Kreis M."/>
            <person name="Lecharny A."/>
        </authorList>
    </citation>
    <scope>GENE FAMILY</scope>
    <scope>NOMENCLATURE</scope>
</reference>
<reference key="7">
    <citation type="journal article" date="2007" name="Mol. Cell. Proteomics">
        <title>Multidimensional protein identification technology (MudPIT) analysis of ubiquitinated proteins in plants.</title>
        <authorList>
            <person name="Maor R."/>
            <person name="Jones A."/>
            <person name="Nuehse T.S."/>
            <person name="Studholme D.J."/>
            <person name="Peck S.C."/>
            <person name="Shirasu K."/>
        </authorList>
    </citation>
    <scope>IDENTIFICATION BY MASS SPECTROMETRY [LARGE SCALE ANALYSIS]</scope>
    <source>
        <strain>cv. Landsberg erecta</strain>
    </source>
</reference>
<reference key="8">
    <citation type="journal article" date="2013" name="PLoS ONE">
        <title>Genome-wide comparative in silico analysis of the RNA helicase gene family in Zea mays and Glycine max: a comparison with Arabidopsis and Oryza sativa.</title>
        <authorList>
            <person name="Xu R."/>
            <person name="Zhang S."/>
            <person name="Huang J."/>
            <person name="Zheng C."/>
        </authorList>
    </citation>
    <scope>GENE FAMILY</scope>
</reference>
<comment type="function">
    <text evidence="1">ATP-dependent RNA helicase involved nonsense-mediated mRNA decay and ribosome biogenesis through rRNA processing.</text>
</comment>
<comment type="catalytic activity">
    <reaction>
        <text>ATP + H2O = ADP + phosphate + H(+)</text>
        <dbReference type="Rhea" id="RHEA:13065"/>
        <dbReference type="ChEBI" id="CHEBI:15377"/>
        <dbReference type="ChEBI" id="CHEBI:15378"/>
        <dbReference type="ChEBI" id="CHEBI:30616"/>
        <dbReference type="ChEBI" id="CHEBI:43474"/>
        <dbReference type="ChEBI" id="CHEBI:456216"/>
        <dbReference type="EC" id="3.6.4.13"/>
    </reaction>
</comment>
<comment type="subcellular location">
    <subcellularLocation>
        <location evidence="1">Nucleus</location>
    </subcellularLocation>
</comment>
<comment type="alternative products">
    <event type="alternative splicing"/>
    <isoform>
        <id>Q8W4R3-1</id>
        <name>1</name>
        <sequence type="displayed"/>
    </isoform>
    <isoform>
        <id>Q8W4R3-2</id>
        <name>2</name>
        <sequence type="described" ref="VSP_019104 VSP_019105"/>
    </isoform>
</comment>
<comment type="domain">
    <text>The Q motif is unique to and characteristic of the DEAD box family of RNA helicases and controls ATP binding and hydrolysis.</text>
</comment>
<comment type="miscellaneous">
    <molecule>Isoform 2</molecule>
    <text evidence="6">May be due to a competing acceptor splice site.</text>
</comment>
<comment type="similarity">
    <text evidence="6">Belongs to the DEAD box helicase family. DDX5/DBP2 subfamily.</text>
</comment>
<comment type="sequence caution" evidence="6">
    <conflict type="erroneous gene model prediction">
        <sequence resource="EMBL-CDS" id="BAB10554"/>
    </conflict>
</comment>
<organism>
    <name type="scientific">Arabidopsis thaliana</name>
    <name type="common">Mouse-ear cress</name>
    <dbReference type="NCBI Taxonomy" id="3702"/>
    <lineage>
        <taxon>Eukaryota</taxon>
        <taxon>Viridiplantae</taxon>
        <taxon>Streptophyta</taxon>
        <taxon>Embryophyta</taxon>
        <taxon>Tracheophyta</taxon>
        <taxon>Spermatophyta</taxon>
        <taxon>Magnoliopsida</taxon>
        <taxon>eudicotyledons</taxon>
        <taxon>Gunneridae</taxon>
        <taxon>Pentapetalae</taxon>
        <taxon>rosids</taxon>
        <taxon>malvids</taxon>
        <taxon>Brassicales</taxon>
        <taxon>Brassicaceae</taxon>
        <taxon>Camelineae</taxon>
        <taxon>Arabidopsis</taxon>
    </lineage>
</organism>
<evidence type="ECO:0000250" key="1"/>
<evidence type="ECO:0000255" key="2">
    <source>
        <dbReference type="PROSITE-ProRule" id="PRU00541"/>
    </source>
</evidence>
<evidence type="ECO:0000255" key="3">
    <source>
        <dbReference type="PROSITE-ProRule" id="PRU00542"/>
    </source>
</evidence>
<evidence type="ECO:0000256" key="4">
    <source>
        <dbReference type="SAM" id="MobiDB-lite"/>
    </source>
</evidence>
<evidence type="ECO:0000303" key="5">
    <source>
    </source>
</evidence>
<evidence type="ECO:0000305" key="6"/>
<feature type="chain" id="PRO_0000239170" description="DEAD-box ATP-dependent RNA helicase 30">
    <location>
        <begin position="1"/>
        <end position="591"/>
    </location>
</feature>
<feature type="domain" description="Helicase ATP-binding" evidence="2">
    <location>
        <begin position="196"/>
        <end position="371"/>
    </location>
</feature>
<feature type="domain" description="Helicase C-terminal" evidence="3">
    <location>
        <begin position="399"/>
        <end position="544"/>
    </location>
</feature>
<feature type="region of interest" description="Disordered" evidence="4">
    <location>
        <begin position="1"/>
        <end position="109"/>
    </location>
</feature>
<feature type="region of interest" description="Disordered" evidence="4">
    <location>
        <begin position="547"/>
        <end position="591"/>
    </location>
</feature>
<feature type="short sequence motif" description="Q motif">
    <location>
        <begin position="165"/>
        <end position="193"/>
    </location>
</feature>
<feature type="short sequence motif" description="DEAD box">
    <location>
        <begin position="319"/>
        <end position="322"/>
    </location>
</feature>
<feature type="compositionally biased region" description="Gly residues" evidence="4">
    <location>
        <begin position="72"/>
        <end position="103"/>
    </location>
</feature>
<feature type="compositionally biased region" description="Gly residues" evidence="4">
    <location>
        <begin position="549"/>
        <end position="571"/>
    </location>
</feature>
<feature type="binding site" evidence="2">
    <location>
        <begin position="209"/>
        <end position="216"/>
    </location>
    <ligand>
        <name>ATP</name>
        <dbReference type="ChEBI" id="CHEBI:30616"/>
    </ligand>
</feature>
<feature type="splice variant" id="VSP_019104" description="In isoform 2." evidence="5">
    <original>DVKDIKCVVN</original>
    <variation>VSSGIREKST</variation>
    <location>
        <begin position="475"/>
        <end position="484"/>
    </location>
</feature>
<feature type="splice variant" id="VSP_019105" description="In isoform 2." evidence="5">
    <location>
        <begin position="485"/>
        <end position="591"/>
    </location>
</feature>
<proteinExistence type="evidence at protein level"/>